<dbReference type="EC" id="7.2.2.20" evidence="1"/>
<dbReference type="EMBL" id="CR767821">
    <property type="protein sequence ID" value="CAH57976.1"/>
    <property type="molecule type" value="Genomic_DNA"/>
</dbReference>
<dbReference type="EMBL" id="CR925678">
    <property type="protein sequence ID" value="CAI26756.1"/>
    <property type="molecule type" value="Genomic_DNA"/>
</dbReference>
<dbReference type="RefSeq" id="WP_011154943.1">
    <property type="nucleotide sequence ID" value="NC_005295.2"/>
</dbReference>
<dbReference type="SMR" id="Q5HBR8"/>
<dbReference type="GeneID" id="33057560"/>
<dbReference type="KEGG" id="eru:Erum2590"/>
<dbReference type="KEGG" id="erw:ERWE_CDS_02620"/>
<dbReference type="eggNOG" id="COG1121">
    <property type="taxonomic scope" value="Bacteria"/>
</dbReference>
<dbReference type="HOGENOM" id="CLU_000604_1_11_5"/>
<dbReference type="Proteomes" id="UP000001021">
    <property type="component" value="Chromosome"/>
</dbReference>
<dbReference type="GO" id="GO:0005886">
    <property type="term" value="C:plasma membrane"/>
    <property type="evidence" value="ECO:0007669"/>
    <property type="project" value="UniProtKB-SubCell"/>
</dbReference>
<dbReference type="GO" id="GO:0015633">
    <property type="term" value="F:ABC-type zinc transporter activity"/>
    <property type="evidence" value="ECO:0007669"/>
    <property type="project" value="UniProtKB-EC"/>
</dbReference>
<dbReference type="GO" id="GO:0005524">
    <property type="term" value="F:ATP binding"/>
    <property type="evidence" value="ECO:0007669"/>
    <property type="project" value="UniProtKB-KW"/>
</dbReference>
<dbReference type="GO" id="GO:0016887">
    <property type="term" value="F:ATP hydrolysis activity"/>
    <property type="evidence" value="ECO:0007669"/>
    <property type="project" value="InterPro"/>
</dbReference>
<dbReference type="Gene3D" id="3.40.50.300">
    <property type="entry name" value="P-loop containing nucleotide triphosphate hydrolases"/>
    <property type="match status" value="1"/>
</dbReference>
<dbReference type="InterPro" id="IPR003593">
    <property type="entry name" value="AAA+_ATPase"/>
</dbReference>
<dbReference type="InterPro" id="IPR003439">
    <property type="entry name" value="ABC_transporter-like_ATP-bd"/>
</dbReference>
<dbReference type="InterPro" id="IPR017871">
    <property type="entry name" value="ABC_transporter-like_CS"/>
</dbReference>
<dbReference type="InterPro" id="IPR050153">
    <property type="entry name" value="Metal_Ion_Import_ABC"/>
</dbReference>
<dbReference type="InterPro" id="IPR027417">
    <property type="entry name" value="P-loop_NTPase"/>
</dbReference>
<dbReference type="PANTHER" id="PTHR42734">
    <property type="entry name" value="METAL TRANSPORT SYSTEM ATP-BINDING PROTEIN TM_0124-RELATED"/>
    <property type="match status" value="1"/>
</dbReference>
<dbReference type="PANTHER" id="PTHR42734:SF17">
    <property type="entry name" value="METAL TRANSPORT SYSTEM ATP-BINDING PROTEIN TM_0124-RELATED"/>
    <property type="match status" value="1"/>
</dbReference>
<dbReference type="Pfam" id="PF00005">
    <property type="entry name" value="ABC_tran"/>
    <property type="match status" value="1"/>
</dbReference>
<dbReference type="SMART" id="SM00382">
    <property type="entry name" value="AAA"/>
    <property type="match status" value="1"/>
</dbReference>
<dbReference type="SUPFAM" id="SSF52540">
    <property type="entry name" value="P-loop containing nucleoside triphosphate hydrolases"/>
    <property type="match status" value="1"/>
</dbReference>
<dbReference type="PROSITE" id="PS00211">
    <property type="entry name" value="ABC_TRANSPORTER_1"/>
    <property type="match status" value="1"/>
</dbReference>
<dbReference type="PROSITE" id="PS50893">
    <property type="entry name" value="ABC_TRANSPORTER_2"/>
    <property type="match status" value="1"/>
</dbReference>
<dbReference type="PROSITE" id="PS51298">
    <property type="entry name" value="ZNUC"/>
    <property type="match status" value="1"/>
</dbReference>
<proteinExistence type="inferred from homology"/>
<organism>
    <name type="scientific">Ehrlichia ruminantium (strain Welgevonden)</name>
    <dbReference type="NCBI Taxonomy" id="254945"/>
    <lineage>
        <taxon>Bacteria</taxon>
        <taxon>Pseudomonadati</taxon>
        <taxon>Pseudomonadota</taxon>
        <taxon>Alphaproteobacteria</taxon>
        <taxon>Rickettsiales</taxon>
        <taxon>Anaplasmataceae</taxon>
        <taxon>Ehrlichia</taxon>
    </lineage>
</organism>
<protein>
    <recommendedName>
        <fullName evidence="1">Zinc import ATP-binding protein ZnuC</fullName>
        <ecNumber evidence="1">7.2.2.20</ecNumber>
    </recommendedName>
</protein>
<comment type="function">
    <text evidence="1">Part of the ABC transporter complex ZnuABC involved in zinc import. Responsible for energy coupling to the transport system.</text>
</comment>
<comment type="catalytic activity">
    <reaction evidence="1">
        <text>Zn(2+)(out) + ATP(in) + H2O(in) = Zn(2+)(in) + ADP(in) + phosphate(in) + H(+)(in)</text>
        <dbReference type="Rhea" id="RHEA:29795"/>
        <dbReference type="ChEBI" id="CHEBI:15377"/>
        <dbReference type="ChEBI" id="CHEBI:15378"/>
        <dbReference type="ChEBI" id="CHEBI:29105"/>
        <dbReference type="ChEBI" id="CHEBI:30616"/>
        <dbReference type="ChEBI" id="CHEBI:43474"/>
        <dbReference type="ChEBI" id="CHEBI:456216"/>
        <dbReference type="EC" id="7.2.2.20"/>
    </reaction>
</comment>
<comment type="subunit">
    <text evidence="1">The complex is composed of two ATP-binding proteins (ZnuC), two transmembrane proteins (ZnuB) and a solute-binding protein (ZnuA).</text>
</comment>
<comment type="subcellular location">
    <subcellularLocation>
        <location evidence="1">Cell inner membrane</location>
        <topology evidence="1">Peripheral membrane protein</topology>
    </subcellularLocation>
</comment>
<comment type="similarity">
    <text evidence="1">Belongs to the ABC transporter superfamily. Zinc importer (TC 3.A.1.15.5) family.</text>
</comment>
<evidence type="ECO:0000255" key="1">
    <source>
        <dbReference type="HAMAP-Rule" id="MF_01725"/>
    </source>
</evidence>
<sequence>MFHNLLGKNKIFSHHDRYVNDYIINVKDLSFAYAKKKVIDNVSFQVKFGEIITILGPNGGGKTTLIRILVGIYKNYLGIVEYAKNFVIGYLPQNFSVNSLIPMTVEYFLVSSYTKQRKKLNLNSVLKDVNVVKILNRQMSEISHGELQLVLLARCLMLNPDIIILDEPVSCMDINAKDSFYKLINQLILRYNLSVIMTSHDLHFVMANSYRVICINKSIYCEGSPSEIVKNEKFLKMFSSYA</sequence>
<accession>Q5HBR8</accession>
<accession>Q5FE68</accession>
<name>ZNUC_EHRRW</name>
<feature type="chain" id="PRO_0000281503" description="Zinc import ATP-binding protein ZnuC">
    <location>
        <begin position="1"/>
        <end position="242"/>
    </location>
</feature>
<feature type="domain" description="ABC transporter" evidence="1">
    <location>
        <begin position="24"/>
        <end position="241"/>
    </location>
</feature>
<feature type="binding site" evidence="1">
    <location>
        <begin position="56"/>
        <end position="63"/>
    </location>
    <ligand>
        <name>ATP</name>
        <dbReference type="ChEBI" id="CHEBI:30616"/>
    </ligand>
</feature>
<keyword id="KW-0067">ATP-binding</keyword>
<keyword id="KW-0997">Cell inner membrane</keyword>
<keyword id="KW-1003">Cell membrane</keyword>
<keyword id="KW-0406">Ion transport</keyword>
<keyword id="KW-0472">Membrane</keyword>
<keyword id="KW-0547">Nucleotide-binding</keyword>
<keyword id="KW-1278">Translocase</keyword>
<keyword id="KW-0813">Transport</keyword>
<keyword id="KW-0862">Zinc</keyword>
<keyword id="KW-0864">Zinc transport</keyword>
<gene>
    <name evidence="1" type="primary">znuC</name>
    <name type="ordered locus">Erum2590</name>
    <name type="ordered locus">ERWE_CDS_02620</name>
</gene>
<reference key="1">
    <citation type="journal article" date="2005" name="Proc. Natl. Acad. Sci. U.S.A.">
        <title>The genome of the heartwater agent Ehrlichia ruminantium contains multiple tandem repeats of actively variable copy number.</title>
        <authorList>
            <person name="Collins N.E."/>
            <person name="Liebenberg J."/>
            <person name="de Villiers E.P."/>
            <person name="Brayton K.A."/>
            <person name="Louw E."/>
            <person name="Pretorius A."/>
            <person name="Faber F.E."/>
            <person name="van Heerden H."/>
            <person name="Josemans A."/>
            <person name="van Kleef M."/>
            <person name="Steyn H.C."/>
            <person name="van Strijp M.F."/>
            <person name="Zweygarth E."/>
            <person name="Jongejan F."/>
            <person name="Maillard J.C."/>
            <person name="Berthier D."/>
            <person name="Botha M."/>
            <person name="Joubert F."/>
            <person name="Corton C.H."/>
            <person name="Thomson N.R."/>
            <person name="Allsopp M.T."/>
            <person name="Allsopp B.A."/>
        </authorList>
    </citation>
    <scope>NUCLEOTIDE SEQUENCE [LARGE SCALE GENOMIC DNA]</scope>
    <source>
        <strain>Welgevonden</strain>
    </source>
</reference>
<reference key="2">
    <citation type="journal article" date="2006" name="J. Bacteriol.">
        <title>Comparative genomic analysis of three strains of Ehrlichia ruminantium reveals an active process of genome size plasticity.</title>
        <authorList>
            <person name="Frutos R."/>
            <person name="Viari A."/>
            <person name="Ferraz C."/>
            <person name="Morgat A."/>
            <person name="Eychenie S."/>
            <person name="Kandassamy Y."/>
            <person name="Chantal I."/>
            <person name="Bensaid A."/>
            <person name="Coissac E."/>
            <person name="Vachiery N."/>
            <person name="Demaille J."/>
            <person name="Martinez D."/>
        </authorList>
    </citation>
    <scope>NUCLEOTIDE SEQUENCE [LARGE SCALE GENOMIC DNA]</scope>
    <source>
        <strain>Welgevonden</strain>
    </source>
</reference>